<name>RECA_ERWT9</name>
<proteinExistence type="inferred from homology"/>
<reference key="1">
    <citation type="journal article" date="2008" name="Environ. Microbiol.">
        <title>The genome of Erwinia tasmaniensis strain Et1/99, a non-pathogenic bacterium in the genus Erwinia.</title>
        <authorList>
            <person name="Kube M."/>
            <person name="Migdoll A.M."/>
            <person name="Mueller I."/>
            <person name="Kuhl H."/>
            <person name="Beck A."/>
            <person name="Reinhardt R."/>
            <person name="Geider K."/>
        </authorList>
    </citation>
    <scope>NUCLEOTIDE SEQUENCE [LARGE SCALE GENOMIC DNA]</scope>
    <source>
        <strain>DSM 17950 / CFBP 7177 / CIP 109463 / NCPPB 4357 / Et1/99</strain>
    </source>
</reference>
<sequence length="355" mass="37961">MAIDDNKQKALAAALGQIEKQFGKGSIMRLGEDRTMDVETISTGSLSLDIALGAGGLPMGRIVEIYGPESSGKTTLTLQVIAAAQRKGKTCAFIDAEHALDPVYAKKLGVDIDNLLCSQPDTGEQALEICDALARSGAVDVIIVDSVAALTPKAEIEGEIGDSHMGLAARMMSQAMRKLAGNLKNSGTLLIFINQIRMKIGVMFGNPETTTGGNALKFYASVRLDIRRIGAIKEGDEVVGSETRVKVVKNKVAAPFKQAEFQIMYGEGINIFGELVDLGVKHKLIEKAGAWYSYNGDKIGQGKANAGNFLKENSAIANEIDAKLREMLLGNQDDKPDFTPAAHEVDEGSEAKENF</sequence>
<gene>
    <name evidence="1" type="primary">recA</name>
    <name type="ordered locus">ETA_26680</name>
</gene>
<dbReference type="EMBL" id="CU468135">
    <property type="protein sequence ID" value="CAO97714.1"/>
    <property type="molecule type" value="Genomic_DNA"/>
</dbReference>
<dbReference type="RefSeq" id="WP_012442375.1">
    <property type="nucleotide sequence ID" value="NC_010694.1"/>
</dbReference>
<dbReference type="SMR" id="B2VHD6"/>
<dbReference type="STRING" id="465817.ETA_26680"/>
<dbReference type="KEGG" id="eta:ETA_26680"/>
<dbReference type="eggNOG" id="COG0468">
    <property type="taxonomic scope" value="Bacteria"/>
</dbReference>
<dbReference type="HOGENOM" id="CLU_040469_3_2_6"/>
<dbReference type="OrthoDB" id="9776733at2"/>
<dbReference type="Proteomes" id="UP000001726">
    <property type="component" value="Chromosome"/>
</dbReference>
<dbReference type="GO" id="GO:0005829">
    <property type="term" value="C:cytosol"/>
    <property type="evidence" value="ECO:0007669"/>
    <property type="project" value="TreeGrafter"/>
</dbReference>
<dbReference type="GO" id="GO:0005524">
    <property type="term" value="F:ATP binding"/>
    <property type="evidence" value="ECO:0007669"/>
    <property type="project" value="UniProtKB-UniRule"/>
</dbReference>
<dbReference type="GO" id="GO:0016887">
    <property type="term" value="F:ATP hydrolysis activity"/>
    <property type="evidence" value="ECO:0007669"/>
    <property type="project" value="InterPro"/>
</dbReference>
<dbReference type="GO" id="GO:0140664">
    <property type="term" value="F:ATP-dependent DNA damage sensor activity"/>
    <property type="evidence" value="ECO:0007669"/>
    <property type="project" value="InterPro"/>
</dbReference>
<dbReference type="GO" id="GO:0003684">
    <property type="term" value="F:damaged DNA binding"/>
    <property type="evidence" value="ECO:0007669"/>
    <property type="project" value="UniProtKB-UniRule"/>
</dbReference>
<dbReference type="GO" id="GO:0003697">
    <property type="term" value="F:single-stranded DNA binding"/>
    <property type="evidence" value="ECO:0007669"/>
    <property type="project" value="UniProtKB-UniRule"/>
</dbReference>
<dbReference type="GO" id="GO:0006310">
    <property type="term" value="P:DNA recombination"/>
    <property type="evidence" value="ECO:0007669"/>
    <property type="project" value="UniProtKB-UniRule"/>
</dbReference>
<dbReference type="GO" id="GO:0006281">
    <property type="term" value="P:DNA repair"/>
    <property type="evidence" value="ECO:0007669"/>
    <property type="project" value="UniProtKB-UniRule"/>
</dbReference>
<dbReference type="GO" id="GO:0009432">
    <property type="term" value="P:SOS response"/>
    <property type="evidence" value="ECO:0007669"/>
    <property type="project" value="UniProtKB-UniRule"/>
</dbReference>
<dbReference type="CDD" id="cd00983">
    <property type="entry name" value="RecA"/>
    <property type="match status" value="1"/>
</dbReference>
<dbReference type="FunFam" id="3.40.50.300:FF:000087">
    <property type="entry name" value="Recombinase RecA"/>
    <property type="match status" value="1"/>
</dbReference>
<dbReference type="Gene3D" id="3.40.50.300">
    <property type="entry name" value="P-loop containing nucleotide triphosphate hydrolases"/>
    <property type="match status" value="1"/>
</dbReference>
<dbReference type="HAMAP" id="MF_00268">
    <property type="entry name" value="RecA"/>
    <property type="match status" value="1"/>
</dbReference>
<dbReference type="InterPro" id="IPR003593">
    <property type="entry name" value="AAA+_ATPase"/>
</dbReference>
<dbReference type="InterPro" id="IPR013765">
    <property type="entry name" value="DNA_recomb/repair_RecA"/>
</dbReference>
<dbReference type="InterPro" id="IPR020584">
    <property type="entry name" value="DNA_recomb/repair_RecA_CS"/>
</dbReference>
<dbReference type="InterPro" id="IPR027417">
    <property type="entry name" value="P-loop_NTPase"/>
</dbReference>
<dbReference type="InterPro" id="IPR049261">
    <property type="entry name" value="RecA-like_C"/>
</dbReference>
<dbReference type="InterPro" id="IPR049428">
    <property type="entry name" value="RecA-like_N"/>
</dbReference>
<dbReference type="InterPro" id="IPR020588">
    <property type="entry name" value="RecA_ATP-bd"/>
</dbReference>
<dbReference type="InterPro" id="IPR023400">
    <property type="entry name" value="RecA_C_sf"/>
</dbReference>
<dbReference type="InterPro" id="IPR020587">
    <property type="entry name" value="RecA_monomer-monomer_interface"/>
</dbReference>
<dbReference type="NCBIfam" id="TIGR02012">
    <property type="entry name" value="tigrfam_recA"/>
    <property type="match status" value="1"/>
</dbReference>
<dbReference type="PANTHER" id="PTHR45900:SF1">
    <property type="entry name" value="MITOCHONDRIAL DNA REPAIR PROTEIN RECA HOMOLOG-RELATED"/>
    <property type="match status" value="1"/>
</dbReference>
<dbReference type="PANTHER" id="PTHR45900">
    <property type="entry name" value="RECA"/>
    <property type="match status" value="1"/>
</dbReference>
<dbReference type="Pfam" id="PF00154">
    <property type="entry name" value="RecA"/>
    <property type="match status" value="1"/>
</dbReference>
<dbReference type="Pfam" id="PF21096">
    <property type="entry name" value="RecA_C"/>
    <property type="match status" value="1"/>
</dbReference>
<dbReference type="PRINTS" id="PR00142">
    <property type="entry name" value="RECA"/>
</dbReference>
<dbReference type="SMART" id="SM00382">
    <property type="entry name" value="AAA"/>
    <property type="match status" value="1"/>
</dbReference>
<dbReference type="SUPFAM" id="SSF52540">
    <property type="entry name" value="P-loop containing nucleoside triphosphate hydrolases"/>
    <property type="match status" value="1"/>
</dbReference>
<dbReference type="SUPFAM" id="SSF54752">
    <property type="entry name" value="RecA protein, C-terminal domain"/>
    <property type="match status" value="1"/>
</dbReference>
<dbReference type="PROSITE" id="PS00321">
    <property type="entry name" value="RECA_1"/>
    <property type="match status" value="1"/>
</dbReference>
<dbReference type="PROSITE" id="PS50162">
    <property type="entry name" value="RECA_2"/>
    <property type="match status" value="1"/>
</dbReference>
<dbReference type="PROSITE" id="PS50163">
    <property type="entry name" value="RECA_3"/>
    <property type="match status" value="1"/>
</dbReference>
<evidence type="ECO:0000255" key="1">
    <source>
        <dbReference type="HAMAP-Rule" id="MF_00268"/>
    </source>
</evidence>
<evidence type="ECO:0000256" key="2">
    <source>
        <dbReference type="SAM" id="MobiDB-lite"/>
    </source>
</evidence>
<accession>B2VHD6</accession>
<keyword id="KW-0067">ATP-binding</keyword>
<keyword id="KW-0963">Cytoplasm</keyword>
<keyword id="KW-0227">DNA damage</keyword>
<keyword id="KW-0233">DNA recombination</keyword>
<keyword id="KW-0234">DNA repair</keyword>
<keyword id="KW-0238">DNA-binding</keyword>
<keyword id="KW-0547">Nucleotide-binding</keyword>
<keyword id="KW-1185">Reference proteome</keyword>
<keyword id="KW-0742">SOS response</keyword>
<comment type="function">
    <text evidence="1">Can catalyze the hydrolysis of ATP in the presence of single-stranded DNA, the ATP-dependent uptake of single-stranded DNA by duplex DNA, and the ATP-dependent hybridization of homologous single-stranded DNAs. It interacts with LexA causing its activation and leading to its autocatalytic cleavage.</text>
</comment>
<comment type="subcellular location">
    <subcellularLocation>
        <location evidence="1">Cytoplasm</location>
    </subcellularLocation>
</comment>
<comment type="similarity">
    <text evidence="1">Belongs to the RecA family.</text>
</comment>
<protein>
    <recommendedName>
        <fullName evidence="1">Protein RecA</fullName>
    </recommendedName>
    <alternativeName>
        <fullName evidence="1">Recombinase A</fullName>
    </alternativeName>
</protein>
<organism>
    <name type="scientific">Erwinia tasmaniensis (strain DSM 17950 / CFBP 7177 / CIP 109463 / NCPPB 4357 / Et1/99)</name>
    <dbReference type="NCBI Taxonomy" id="465817"/>
    <lineage>
        <taxon>Bacteria</taxon>
        <taxon>Pseudomonadati</taxon>
        <taxon>Pseudomonadota</taxon>
        <taxon>Gammaproteobacteria</taxon>
        <taxon>Enterobacterales</taxon>
        <taxon>Erwiniaceae</taxon>
        <taxon>Erwinia</taxon>
    </lineage>
</organism>
<feature type="chain" id="PRO_1000114333" description="Protein RecA">
    <location>
        <begin position="1"/>
        <end position="355"/>
    </location>
</feature>
<feature type="region of interest" description="Disordered" evidence="2">
    <location>
        <begin position="331"/>
        <end position="355"/>
    </location>
</feature>
<feature type="binding site" evidence="1">
    <location>
        <begin position="67"/>
        <end position="74"/>
    </location>
    <ligand>
        <name>ATP</name>
        <dbReference type="ChEBI" id="CHEBI:30616"/>
    </ligand>
</feature>